<reference key="1">
    <citation type="journal article" date="1999" name="Circ. Res.">
        <title>In vivo modeling of myosin binding protein C familial hypertrophic cardiomyopathy.</title>
        <authorList>
            <person name="Yang Q."/>
            <person name="Sanbe A."/>
            <person name="Osinska H."/>
            <person name="Hewett T.E."/>
            <person name="Klevitsky R."/>
            <person name="Robbins J."/>
        </authorList>
    </citation>
    <scope>NUCLEOTIDE SEQUENCE [MRNA]</scope>
    <source>
        <strain>FVB/NJ</strain>
        <tissue>Heart muscle</tissue>
    </source>
</reference>
<reference key="2">
    <citation type="submission" date="1998-10" db="EMBL/GenBank/DDBJ databases">
        <title>Sequence of the cardiac isoform of murine myosin binding protein-C (MyBP-C) cDNA.</title>
        <authorList>
            <person name="McDonald K.S."/>
            <person name="Hollander M.S."/>
            <person name="Moss R.L."/>
        </authorList>
    </citation>
    <scope>NUCLEOTIDE SEQUENCE [MRNA]</scope>
    <source>
        <tissue>Heart muscle</tissue>
    </source>
</reference>
<reference key="3">
    <citation type="journal article" date="2009" name="Proc. Natl. Acad. Sci. U.S.A.">
        <title>Top-down high-resolution mass spectrometry of cardiac myosin binding protein C revealed that truncation alters protein phosphorylation state.</title>
        <authorList>
            <person name="Ge Y."/>
            <person name="Rybakova I.N."/>
            <person name="Xu Q."/>
            <person name="Moss R.L."/>
        </authorList>
    </citation>
    <scope>ACETYLATION AT MET-1</scope>
    <scope>PHOSPHORYLATION AT SER-273; SER-282 AND SER-302</scope>
</reference>
<reference key="4">
    <citation type="journal article" date="2010" name="Cell">
        <title>A tissue-specific atlas of mouse protein phosphorylation and expression.</title>
        <authorList>
            <person name="Huttlin E.L."/>
            <person name="Jedrychowski M.P."/>
            <person name="Elias J.E."/>
            <person name="Goswami T."/>
            <person name="Rad R."/>
            <person name="Beausoleil S.A."/>
            <person name="Villen J."/>
            <person name="Haas W."/>
            <person name="Sowa M.E."/>
            <person name="Gygi S.P."/>
        </authorList>
    </citation>
    <scope>PHOSPHORYLATION [LARGE SCALE ANALYSIS] AT SER-47; SER-72; SER-307; SER-423; SER-455 AND SER-546</scope>
    <scope>IDENTIFICATION BY MASS SPECTROMETRY [LARGE SCALE ANALYSIS]</scope>
    <source>
        <tissue>Heart</tissue>
        <tissue>Lung</tissue>
    </source>
</reference>
<reference key="5">
    <citation type="journal article" date="2014" name="Mol. Cell. Proteomics">
        <title>Immunoaffinity enrichment and mass spectrometry analysis of protein methylation.</title>
        <authorList>
            <person name="Guo A."/>
            <person name="Gu H."/>
            <person name="Zhou J."/>
            <person name="Mulhern D."/>
            <person name="Wang Y."/>
            <person name="Lee K.A."/>
            <person name="Yang V."/>
            <person name="Aguiar M."/>
            <person name="Kornhauser J."/>
            <person name="Jia X."/>
            <person name="Ren J."/>
            <person name="Beausoleil S.A."/>
            <person name="Silva J.C."/>
            <person name="Vemulapalli V."/>
            <person name="Bedford M.T."/>
            <person name="Comb M.J."/>
        </authorList>
    </citation>
    <scope>METHYLATION [LARGE SCALE ANALYSIS] AT ARG-1237</scope>
    <scope>IDENTIFICATION BY MASS SPECTROMETRY [LARGE SCALE ANALYSIS]</scope>
    <source>
        <tissue>Brain</tissue>
    </source>
</reference>
<gene>
    <name type="primary">Mybpc3</name>
</gene>
<dbReference type="EMBL" id="AF059576">
    <property type="protein sequence ID" value="AAC14570.1"/>
    <property type="molecule type" value="mRNA"/>
</dbReference>
<dbReference type="EMBL" id="AF097333">
    <property type="protein sequence ID" value="AAC64202.1"/>
    <property type="molecule type" value="mRNA"/>
</dbReference>
<dbReference type="CCDS" id="CCDS50631.1"/>
<dbReference type="PDB" id="4EDQ">
    <property type="method" value="X-ray"/>
    <property type="resolution" value="1.64 A"/>
    <property type="chains" value="A/B=149-269"/>
</dbReference>
<dbReference type="PDBsum" id="4EDQ"/>
<dbReference type="SMR" id="O70468"/>
<dbReference type="DIP" id="DIP-48624N"/>
<dbReference type="FunCoup" id="O70468">
    <property type="interactions" value="184"/>
</dbReference>
<dbReference type="IntAct" id="O70468">
    <property type="interactions" value="34"/>
</dbReference>
<dbReference type="STRING" id="10090.ENSMUSP00000127070"/>
<dbReference type="GlyGen" id="O70468">
    <property type="glycosylation" value="3 sites, 1 O-linked glycan (2 sites)"/>
</dbReference>
<dbReference type="iPTMnet" id="O70468"/>
<dbReference type="PhosphoSitePlus" id="O70468"/>
<dbReference type="jPOST" id="O70468"/>
<dbReference type="PaxDb" id="10090-ENSMUSP00000127070"/>
<dbReference type="PeptideAtlas" id="O70468"/>
<dbReference type="ProteomicsDB" id="287598"/>
<dbReference type="AGR" id="MGI:102844"/>
<dbReference type="MGI" id="MGI:102844">
    <property type="gene designation" value="Mybpc3"/>
</dbReference>
<dbReference type="eggNOG" id="ENOG502QWRQ">
    <property type="taxonomic scope" value="Eukaryota"/>
</dbReference>
<dbReference type="InParanoid" id="O70468"/>
<dbReference type="Reactome" id="R-MMU-390522">
    <property type="pathway name" value="Striated Muscle Contraction"/>
</dbReference>
<dbReference type="ChiTaRS" id="Mybpc3">
    <property type="organism name" value="mouse"/>
</dbReference>
<dbReference type="PRO" id="PR:O70468"/>
<dbReference type="Proteomes" id="UP000000589">
    <property type="component" value="Unplaced"/>
</dbReference>
<dbReference type="RNAct" id="O70468">
    <property type="molecule type" value="protein"/>
</dbReference>
<dbReference type="GO" id="GO:0031672">
    <property type="term" value="C:A band"/>
    <property type="evidence" value="ECO:0000314"/>
    <property type="project" value="MGI"/>
</dbReference>
<dbReference type="GO" id="GO:0005856">
    <property type="term" value="C:cytoskeleton"/>
    <property type="evidence" value="ECO:0000304"/>
    <property type="project" value="MGI"/>
</dbReference>
<dbReference type="GO" id="GO:0030016">
    <property type="term" value="C:myofibril"/>
    <property type="evidence" value="ECO:0000314"/>
    <property type="project" value="MGI"/>
</dbReference>
<dbReference type="GO" id="GO:0032982">
    <property type="term" value="C:myosin filament"/>
    <property type="evidence" value="ECO:0007669"/>
    <property type="project" value="UniProtKB-KW"/>
</dbReference>
<dbReference type="GO" id="GO:0030017">
    <property type="term" value="C:sarcomere"/>
    <property type="evidence" value="ECO:0000314"/>
    <property type="project" value="MGI"/>
</dbReference>
<dbReference type="GO" id="GO:0003779">
    <property type="term" value="F:actin binding"/>
    <property type="evidence" value="ECO:0007669"/>
    <property type="project" value="UniProtKB-KW"/>
</dbReference>
<dbReference type="GO" id="GO:0046872">
    <property type="term" value="F:metal ion binding"/>
    <property type="evidence" value="ECO:0007669"/>
    <property type="project" value="UniProtKB-KW"/>
</dbReference>
<dbReference type="GO" id="GO:0032036">
    <property type="term" value="F:myosin heavy chain binding"/>
    <property type="evidence" value="ECO:0000353"/>
    <property type="project" value="MGI"/>
</dbReference>
<dbReference type="GO" id="GO:0005200">
    <property type="term" value="F:structural constituent of cytoskeleton"/>
    <property type="evidence" value="ECO:0000304"/>
    <property type="project" value="MGI"/>
</dbReference>
<dbReference type="GO" id="GO:0060048">
    <property type="term" value="P:cardiac muscle contraction"/>
    <property type="evidence" value="ECO:0000315"/>
    <property type="project" value="MGI"/>
</dbReference>
<dbReference type="GO" id="GO:0007155">
    <property type="term" value="P:cell adhesion"/>
    <property type="evidence" value="ECO:0007669"/>
    <property type="project" value="UniProtKB-KW"/>
</dbReference>
<dbReference type="GO" id="GO:0003007">
    <property type="term" value="P:heart morphogenesis"/>
    <property type="evidence" value="ECO:0000315"/>
    <property type="project" value="MGI"/>
</dbReference>
<dbReference type="GO" id="GO:0006936">
    <property type="term" value="P:muscle contraction"/>
    <property type="evidence" value="ECO:0000304"/>
    <property type="project" value="MGI"/>
</dbReference>
<dbReference type="GO" id="GO:0031034">
    <property type="term" value="P:myosin filament assembly"/>
    <property type="evidence" value="ECO:0000315"/>
    <property type="project" value="MGI"/>
</dbReference>
<dbReference type="GO" id="GO:0008016">
    <property type="term" value="P:regulation of heart contraction"/>
    <property type="evidence" value="ECO:0000315"/>
    <property type="project" value="MGI"/>
</dbReference>
<dbReference type="GO" id="GO:0002027">
    <property type="term" value="P:regulation of heart rate"/>
    <property type="evidence" value="ECO:0000315"/>
    <property type="project" value="MGI"/>
</dbReference>
<dbReference type="GO" id="GO:0045214">
    <property type="term" value="P:sarcomere organization"/>
    <property type="evidence" value="ECO:0000315"/>
    <property type="project" value="MGI"/>
</dbReference>
<dbReference type="CDD" id="cd00063">
    <property type="entry name" value="FN3"/>
    <property type="match status" value="3"/>
</dbReference>
<dbReference type="CDD" id="cd00096">
    <property type="entry name" value="Ig"/>
    <property type="match status" value="1"/>
</dbReference>
<dbReference type="CDD" id="cd05894">
    <property type="entry name" value="Ig_C5_MyBP-C"/>
    <property type="match status" value="1"/>
</dbReference>
<dbReference type="CDD" id="cd05748">
    <property type="entry name" value="Ig_Titin_like"/>
    <property type="match status" value="1"/>
</dbReference>
<dbReference type="CDD" id="cd20962">
    <property type="entry name" value="IgI_C1_MyBP-C_like"/>
    <property type="match status" value="1"/>
</dbReference>
<dbReference type="CDD" id="cd20967">
    <property type="entry name" value="IgI_C2_MyBP-C-like"/>
    <property type="match status" value="1"/>
</dbReference>
<dbReference type="FunFam" id="2.60.40.10:FF:000225">
    <property type="entry name" value="Myosin-binding protein C, cardiac-type"/>
    <property type="match status" value="1"/>
</dbReference>
<dbReference type="FunFam" id="2.60.40.10:FF:000326">
    <property type="entry name" value="Myosin-binding protein C, cardiac-type"/>
    <property type="match status" value="1"/>
</dbReference>
<dbReference type="FunFam" id="2.60.40.10:FF:000518">
    <property type="entry name" value="Myosin-binding protein C, cardiac-type"/>
    <property type="match status" value="1"/>
</dbReference>
<dbReference type="FunFam" id="2.60.40.10:FF:000576">
    <property type="entry name" value="Myosin-binding protein C, cardiac-type"/>
    <property type="match status" value="1"/>
</dbReference>
<dbReference type="FunFam" id="2.60.40.10:FF:000031">
    <property type="entry name" value="Myosin-binding protein C, slow type"/>
    <property type="match status" value="1"/>
</dbReference>
<dbReference type="FunFam" id="2.60.40.10:FF:000060">
    <property type="entry name" value="Myosin-binding protein C, slow type"/>
    <property type="match status" value="1"/>
</dbReference>
<dbReference type="FunFam" id="2.60.40.10:FF:000062">
    <property type="entry name" value="Myosin-binding protein C, slow type"/>
    <property type="match status" value="1"/>
</dbReference>
<dbReference type="FunFam" id="2.60.40.10:FF:000070">
    <property type="entry name" value="Myosin-binding protein C, slow type"/>
    <property type="match status" value="1"/>
</dbReference>
<dbReference type="FunFam" id="2.60.40.10:FF:000081">
    <property type="entry name" value="Myosin-binding protein C, slow type"/>
    <property type="match status" value="1"/>
</dbReference>
<dbReference type="FunFam" id="2.60.40.10:FF:000085">
    <property type="entry name" value="Myosin-binding protein C, slow type"/>
    <property type="match status" value="1"/>
</dbReference>
<dbReference type="FunFam" id="2.60.40.10:FF:000111">
    <property type="entry name" value="Myosin-binding protein C, slow type"/>
    <property type="match status" value="1"/>
</dbReference>
<dbReference type="Gene3D" id="2.60.40.10">
    <property type="entry name" value="Immunoglobulins"/>
    <property type="match status" value="11"/>
</dbReference>
<dbReference type="InterPro" id="IPR003961">
    <property type="entry name" value="FN3_dom"/>
</dbReference>
<dbReference type="InterPro" id="IPR036116">
    <property type="entry name" value="FN3_sf"/>
</dbReference>
<dbReference type="InterPro" id="IPR007110">
    <property type="entry name" value="Ig-like_dom"/>
</dbReference>
<dbReference type="InterPro" id="IPR036179">
    <property type="entry name" value="Ig-like_dom_sf"/>
</dbReference>
<dbReference type="InterPro" id="IPR013783">
    <property type="entry name" value="Ig-like_fold"/>
</dbReference>
<dbReference type="InterPro" id="IPR013098">
    <property type="entry name" value="Ig_I-set"/>
</dbReference>
<dbReference type="InterPro" id="IPR003599">
    <property type="entry name" value="Ig_sub"/>
</dbReference>
<dbReference type="InterPro" id="IPR003598">
    <property type="entry name" value="Ig_sub2"/>
</dbReference>
<dbReference type="InterPro" id="IPR040849">
    <property type="entry name" value="MyBP-C_THB"/>
</dbReference>
<dbReference type="InterPro" id="IPR050964">
    <property type="entry name" value="Striated_Muscle_Regulatory"/>
</dbReference>
<dbReference type="PANTHER" id="PTHR13817:SF73">
    <property type="entry name" value="FIBRONECTIN TYPE-III DOMAIN-CONTAINING PROTEIN"/>
    <property type="match status" value="1"/>
</dbReference>
<dbReference type="PANTHER" id="PTHR13817">
    <property type="entry name" value="TITIN"/>
    <property type="match status" value="1"/>
</dbReference>
<dbReference type="Pfam" id="PF00041">
    <property type="entry name" value="fn3"/>
    <property type="match status" value="3"/>
</dbReference>
<dbReference type="Pfam" id="PF07679">
    <property type="entry name" value="I-set"/>
    <property type="match status" value="8"/>
</dbReference>
<dbReference type="Pfam" id="PF18362">
    <property type="entry name" value="THB"/>
    <property type="match status" value="1"/>
</dbReference>
<dbReference type="SMART" id="SM00060">
    <property type="entry name" value="FN3"/>
    <property type="match status" value="3"/>
</dbReference>
<dbReference type="SMART" id="SM00409">
    <property type="entry name" value="IG"/>
    <property type="match status" value="8"/>
</dbReference>
<dbReference type="SMART" id="SM00408">
    <property type="entry name" value="IGc2"/>
    <property type="match status" value="6"/>
</dbReference>
<dbReference type="SUPFAM" id="SSF49265">
    <property type="entry name" value="Fibronectin type III"/>
    <property type="match status" value="2"/>
</dbReference>
<dbReference type="SUPFAM" id="SSF48726">
    <property type="entry name" value="Immunoglobulin"/>
    <property type="match status" value="8"/>
</dbReference>
<dbReference type="PROSITE" id="PS50853">
    <property type="entry name" value="FN3"/>
    <property type="match status" value="3"/>
</dbReference>
<dbReference type="PROSITE" id="PS50835">
    <property type="entry name" value="IG_LIKE"/>
    <property type="match status" value="7"/>
</dbReference>
<sequence>MPEPGKKPVSAFNKKPRSAEVTAGSAAVFEAETERSGVMVRWQRDGSDITANDKYGLAAEGKRHTLTVRDASPDDQGSYAVIAGSSKVKFDLKVTEPAPPEKAESEVAPGAPEEVPAPATELEESVSSPEGSVSVTQDGSAAEHQGAPDDPIGLFLMRPQDGEVTVGGSIVFSARVAGASLLKPPVVKWFKGKWVDLSSKVGQHLQLHDSYDRASKVYLFELHITDAQTTSAGGYRCEVSTKDKFDSCNFNLTVHEAIGSGDLDLRSAFRRTSLAGAGRRTSDSHEDAGTPDFSSLLKKRDSFRRDSKLEAPAEEDVWEILRQAPPSEYERIAFQHGVEACHRPLKRLKGMKQDEKKSTAFQKKLEPAYQVNKGHKIRLTVELADPDAEVKWLKNGQEIQMSGSKYIFESVGAKRTLTISQCSLADDAAYQCVVGGEKCSTELFVKEPPVLITRSLEDQLVMVGQRVEFECEVSEEGAQVKWLKDGVELTREETFKYRFKKDGRKHHLIINEATLEDAGHYAVRTSGGQSLAELIVQEKKLEVYQSIADLAVGAKDQAVFKCEVSDENVRGVWLKNGKELVPDNRIKVSHIGRVHKLTIDDVTPADEADYSFVPEGFACNLSAKLHFMEVKIDFVPRQEPPKIHLDCPGSTPDTIVVVTGNKLRLDVPISGDPAPTVVWQKTVTQGKKASAGPHPDAPEDAGADEEWVFDKKLLCETEGRVRVETTKDRSVFTVEGAEKEDEGVYTVTVKNPVGEDQVNLTVKVIDVPDAPAAPKISNVGEDSCTVQWEPPAYDGGQPVLGYILERKKKKSYRWMRLNFDLLRELSHEARRMIEGVAYEMRVYAVNAVGMSRPSPASQPFMPIGPPGEPTHLAVEDVSDTTVSLKWRPPERVGAGGLDGYSVEYCQEGCSEWTPALQGLTERRSMLVKDLPTGARLLFRVRAHNVAGPGGPIVTKEPVTVQEILQRPRLQLPRHLRQTIQKKVGEPVNLLIPFQGKPRPQVTWTKEGQPLAGEEVSIRNSPTDTILFIRAARRTHSGTYQVTVRIENMEDKATLILQIVDKPSPPQDIRIVETWGFNVALEWKPPQDDGNTEIWGYTVQKADKKTMEWFTVLEHYRRTHCVVSELIIGNGYYFRVFSHNMVGSSDKAAATKEPVFIPRPGITYEPPKYKALDFSEAPSFTQPLANRSIIAGYNAILCCAVRGSPKPKISWFKNGLDLGEDARFRMFCKQGVLTLEIRKPCPYDGGVYVCRATNLQGEAQCECRLEVRVPQ</sequence>
<name>MYPC3_MOUSE</name>
<protein>
    <recommendedName>
        <fullName>Myosin-binding protein C, cardiac-type</fullName>
        <shortName>Cardiac MyBP-C</shortName>
    </recommendedName>
    <alternativeName>
        <fullName>C-protein, cardiac muscle isoform</fullName>
    </alternativeName>
</protein>
<proteinExistence type="evidence at protein level"/>
<organism>
    <name type="scientific">Mus musculus</name>
    <name type="common">Mouse</name>
    <dbReference type="NCBI Taxonomy" id="10090"/>
    <lineage>
        <taxon>Eukaryota</taxon>
        <taxon>Metazoa</taxon>
        <taxon>Chordata</taxon>
        <taxon>Craniata</taxon>
        <taxon>Vertebrata</taxon>
        <taxon>Euteleostomi</taxon>
        <taxon>Mammalia</taxon>
        <taxon>Eutheria</taxon>
        <taxon>Euarchontoglires</taxon>
        <taxon>Glires</taxon>
        <taxon>Rodentia</taxon>
        <taxon>Myomorpha</taxon>
        <taxon>Muroidea</taxon>
        <taxon>Muridae</taxon>
        <taxon>Murinae</taxon>
        <taxon>Mus</taxon>
        <taxon>Mus</taxon>
    </lineage>
</organism>
<accession>O70468</accession>
<accession>O88997</accession>
<keyword id="KW-0002">3D-structure</keyword>
<keyword id="KW-0007">Acetylation</keyword>
<keyword id="KW-0009">Actin-binding</keyword>
<keyword id="KW-0130">Cell adhesion</keyword>
<keyword id="KW-1015">Disulfide bond</keyword>
<keyword id="KW-0393">Immunoglobulin domain</keyword>
<keyword id="KW-0479">Metal-binding</keyword>
<keyword id="KW-0488">Methylation</keyword>
<keyword id="KW-0514">Muscle protein</keyword>
<keyword id="KW-0597">Phosphoprotein</keyword>
<keyword id="KW-1185">Reference proteome</keyword>
<keyword id="KW-0677">Repeat</keyword>
<keyword id="KW-0787">Thick filament</keyword>
<keyword id="KW-0832">Ubl conjugation</keyword>
<keyword id="KW-0862">Zinc</keyword>
<comment type="function">
    <text>Thick filament-associated protein located in the crossbridge region of vertebrate striated muscle a bands. In vitro it binds MHC, F-actin and native thin filaments, and modifies the activity of actin-activated myosin ATPase. It may modulate muscle contraction or may play a more structural role.</text>
</comment>
<comment type="interaction">
    <interactant intactId="EBI-8347074">
        <id>O70468</id>
    </interactant>
    <interactant intactId="EBI-352284">
        <id>P68033</id>
        <label>Actc1</label>
    </interactant>
    <organismsDiffer>false</organismsDiffer>
    <experiments>3</experiments>
</comment>
<comment type="interaction">
    <interactant intactId="EBI-8347074">
        <id>O70468</id>
    </interactant>
    <interactant intactId="EBI-299157">
        <id>Q02566</id>
        <label>Myh6</label>
    </interactant>
    <organismsDiffer>false</organismsDiffer>
    <experiments>5</experiments>
</comment>
<comment type="interaction">
    <interactant intactId="EBI-8347074">
        <id>O70468</id>
    </interactant>
    <interactant intactId="EBI-367540">
        <id>P68135</id>
        <label>ACTA1</label>
    </interactant>
    <organismsDiffer>true</organismsDiffer>
    <experiments>2</experiments>
</comment>
<comment type="PTM">
    <text evidence="1">Substrate for phosphorylation by PKA and PKC. Reversible phosphorylation appears to modulate contraction (By similarity).</text>
</comment>
<comment type="PTM">
    <text evidence="3">Polyubiquitinated.</text>
</comment>
<comment type="similarity">
    <text evidence="8">Belongs to the immunoglobulin superfamily. MyBP family.</text>
</comment>
<feature type="chain" id="PRO_0000072694" description="Myosin-binding protein C, cardiac-type">
    <location>
        <begin position="1"/>
        <end position="1270"/>
    </location>
</feature>
<feature type="domain" description="Ig-like C2-type 1">
    <location>
        <begin position="151"/>
        <end position="254"/>
    </location>
</feature>
<feature type="domain" description="Ig-like C2-type 2">
    <location>
        <begin position="358"/>
        <end position="448"/>
    </location>
</feature>
<feature type="domain" description="Ig-like C2-type 3">
    <location>
        <begin position="449"/>
        <end position="539"/>
    </location>
</feature>
<feature type="domain" description="Ig-like C2-type 4">
    <location>
        <begin position="540"/>
        <end position="629"/>
    </location>
</feature>
<feature type="domain" description="Ig-like C2-type 5">
    <location>
        <begin position="641"/>
        <end position="767"/>
    </location>
</feature>
<feature type="domain" description="Fibronectin type-III 1" evidence="5">
    <location>
        <begin position="770"/>
        <end position="866"/>
    </location>
</feature>
<feature type="domain" description="Fibronectin type-III 2" evidence="5">
    <location>
        <begin position="868"/>
        <end position="963"/>
    </location>
</feature>
<feature type="domain" description="Ig-like C2-type 6">
    <location>
        <begin position="967"/>
        <end position="1061"/>
    </location>
</feature>
<feature type="domain" description="Fibronectin type-III 3" evidence="5">
    <location>
        <begin position="1064"/>
        <end position="1159"/>
    </location>
</feature>
<feature type="domain" description="Ig-like C2-type 7">
    <location>
        <begin position="1177"/>
        <end position="1270"/>
    </location>
</feature>
<feature type="region of interest" description="Disordered" evidence="6">
    <location>
        <begin position="1"/>
        <end position="24"/>
    </location>
</feature>
<feature type="region of interest" description="Disordered" evidence="6">
    <location>
        <begin position="94"/>
        <end position="152"/>
    </location>
</feature>
<feature type="region of interest" description="Disordered" evidence="6">
    <location>
        <begin position="683"/>
        <end position="702"/>
    </location>
</feature>
<feature type="compositionally biased region" description="Basic and acidic residues" evidence="6">
    <location>
        <begin position="94"/>
        <end position="105"/>
    </location>
</feature>
<feature type="compositionally biased region" description="Low complexity" evidence="6">
    <location>
        <begin position="106"/>
        <end position="135"/>
    </location>
</feature>
<feature type="binding site" evidence="3">
    <location>
        <position position="206"/>
    </location>
    <ligand>
        <name>Zn(2+)</name>
        <dbReference type="ChEBI" id="CHEBI:29105"/>
    </ligand>
</feature>
<feature type="binding site" evidence="3">
    <location>
        <position position="208"/>
    </location>
    <ligand>
        <name>Zn(2+)</name>
        <dbReference type="ChEBI" id="CHEBI:29105"/>
    </ligand>
</feature>
<feature type="binding site" evidence="3">
    <location>
        <position position="221"/>
    </location>
    <ligand>
        <name>Zn(2+)</name>
        <dbReference type="ChEBI" id="CHEBI:29105"/>
    </ligand>
</feature>
<feature type="binding site" evidence="3">
    <location>
        <position position="223"/>
    </location>
    <ligand>
        <name>Zn(2+)</name>
        <dbReference type="ChEBI" id="CHEBI:29105"/>
    </ligand>
</feature>
<feature type="modified residue" description="N-acetylmethionine" evidence="7">
    <location>
        <position position="1"/>
    </location>
</feature>
<feature type="modified residue" description="Phosphoserine" evidence="9">
    <location>
        <position position="47"/>
    </location>
</feature>
<feature type="modified residue" description="Phosphoserine" evidence="9">
    <location>
        <position position="72"/>
    </location>
</feature>
<feature type="modified residue" description="Phosphoserine; by PKA and PKC" evidence="7">
    <location>
        <position position="273"/>
    </location>
</feature>
<feature type="modified residue" description="Phosphoserine; by PKA and PKC" evidence="7">
    <location>
        <position position="282"/>
    </location>
</feature>
<feature type="modified residue" description="Phosphoserine; by PKA and PKC" evidence="7">
    <location>
        <position position="302"/>
    </location>
</feature>
<feature type="modified residue" description="Phosphoserine" evidence="9">
    <location>
        <position position="307"/>
    </location>
</feature>
<feature type="modified residue" description="Phosphoserine" evidence="9">
    <location>
        <position position="423"/>
    </location>
</feature>
<feature type="modified residue" description="Phosphoserine" evidence="9">
    <location>
        <position position="455"/>
    </location>
</feature>
<feature type="modified residue" description="Phosphoserine" evidence="9">
    <location>
        <position position="546"/>
    </location>
</feature>
<feature type="modified residue" description="Phosphothreonine" evidence="2">
    <location>
        <position position="603"/>
    </location>
</feature>
<feature type="modified residue" description="Omega-N-methylarginine" evidence="10">
    <location>
        <position position="1237"/>
    </location>
</feature>
<feature type="disulfide bond" evidence="4">
    <location>
        <begin position="432"/>
        <end position="439"/>
    </location>
</feature>
<feature type="sequence conflict" description="In Ref. 2; AAC64202." evidence="8" ref="2">
    <original>E</original>
    <variation>G</variation>
    <location>
        <position position="32"/>
    </location>
</feature>
<feature type="sequence conflict" description="In Ref. 2; AAC64202." evidence="8" ref="2">
    <original>M</original>
    <variation>K</variation>
    <location>
        <position position="39"/>
    </location>
</feature>
<feature type="sequence conflict" description="In Ref. 2; AAC64202." evidence="8" ref="2">
    <original>E</original>
    <variation>K</variation>
    <location>
        <position position="113"/>
    </location>
</feature>
<feature type="sequence conflict" description="In Ref. 2; AAC64202." evidence="8" ref="2">
    <original>N</original>
    <variation>S</variation>
    <location>
        <position position="249"/>
    </location>
</feature>
<feature type="sequence conflict" description="In Ref. 2; AAC64202." evidence="8" ref="2">
    <original>P</original>
    <variation>L</variation>
    <location>
        <position position="291"/>
    </location>
</feature>
<feature type="sequence conflict" description="In Ref. 2; AAC64202." evidence="8" ref="2">
    <original>EACHRP</original>
    <variation>TDLRGM</variation>
    <location>
        <begin position="339"/>
        <end position="344"/>
    </location>
</feature>
<feature type="sequence conflict" description="In Ref. 2; AAC64202." evidence="8" ref="2">
    <original>T</original>
    <variation>A</variation>
    <location>
        <position position="659"/>
    </location>
</feature>
<feature type="sequence conflict" description="In Ref. 2; AAC64202." evidence="8" ref="2">
    <original>A</original>
    <variation>T</variation>
    <location>
        <position position="691"/>
    </location>
</feature>
<feature type="sequence conflict" description="In Ref. 2; AAC64202." evidence="8" ref="2">
    <original>E</original>
    <variation>G</variation>
    <location>
        <position position="738"/>
    </location>
</feature>
<feature type="sequence conflict" description="In Ref. 2; AAC64202." evidence="8" ref="2">
    <original>R</original>
    <variation>T</variation>
    <location>
        <position position="923"/>
    </location>
</feature>
<feature type="strand" evidence="11">
    <location>
        <begin position="155"/>
        <end position="157"/>
    </location>
</feature>
<feature type="strand" evidence="11">
    <location>
        <begin position="162"/>
        <end position="165"/>
    </location>
</feature>
<feature type="strand" evidence="11">
    <location>
        <begin position="170"/>
        <end position="177"/>
    </location>
</feature>
<feature type="strand" evidence="11">
    <location>
        <begin position="181"/>
        <end position="183"/>
    </location>
</feature>
<feature type="strand" evidence="11">
    <location>
        <begin position="186"/>
        <end position="191"/>
    </location>
</feature>
<feature type="turn" evidence="11">
    <location>
        <begin position="192"/>
        <end position="194"/>
    </location>
</feature>
<feature type="helix" evidence="11">
    <location>
        <begin position="197"/>
        <end position="200"/>
    </location>
</feature>
<feature type="strand" evidence="11">
    <location>
        <begin position="205"/>
        <end position="212"/>
    </location>
</feature>
<feature type="turn" evidence="11">
    <location>
        <begin position="213"/>
        <end position="216"/>
    </location>
</feature>
<feature type="strand" evidence="11">
    <location>
        <begin position="217"/>
        <end position="224"/>
    </location>
</feature>
<feature type="helix" evidence="11">
    <location>
        <begin position="229"/>
        <end position="231"/>
    </location>
</feature>
<feature type="strand" evidence="11">
    <location>
        <begin position="233"/>
        <end position="240"/>
    </location>
</feature>
<feature type="strand" evidence="11">
    <location>
        <begin position="245"/>
        <end position="255"/>
    </location>
</feature>
<evidence type="ECO:0000250" key="1"/>
<evidence type="ECO:0000250" key="2">
    <source>
        <dbReference type="UniProtKB" id="P56741"/>
    </source>
</evidence>
<evidence type="ECO:0000250" key="3">
    <source>
        <dbReference type="UniProtKB" id="Q14896"/>
    </source>
</evidence>
<evidence type="ECO:0000255" key="4">
    <source>
        <dbReference type="PROSITE-ProRule" id="PRU00114"/>
    </source>
</evidence>
<evidence type="ECO:0000255" key="5">
    <source>
        <dbReference type="PROSITE-ProRule" id="PRU00316"/>
    </source>
</evidence>
<evidence type="ECO:0000256" key="6">
    <source>
        <dbReference type="SAM" id="MobiDB-lite"/>
    </source>
</evidence>
<evidence type="ECO:0000269" key="7">
    <source>
    </source>
</evidence>
<evidence type="ECO:0000305" key="8"/>
<evidence type="ECO:0007744" key="9">
    <source>
    </source>
</evidence>
<evidence type="ECO:0007744" key="10">
    <source>
    </source>
</evidence>
<evidence type="ECO:0007829" key="11">
    <source>
        <dbReference type="PDB" id="4EDQ"/>
    </source>
</evidence>